<reference key="1">
    <citation type="journal article" date="2005" name="Science">
        <title>Genome streamlining in a cosmopolitan oceanic bacterium.</title>
        <authorList>
            <person name="Giovannoni S.J."/>
            <person name="Tripp H.J."/>
            <person name="Givan S."/>
            <person name="Podar M."/>
            <person name="Vergin K.L."/>
            <person name="Baptista D."/>
            <person name="Bibbs L."/>
            <person name="Eads J."/>
            <person name="Richardson T.H."/>
            <person name="Noordewier M."/>
            <person name="Rappe M.S."/>
            <person name="Short J.M."/>
            <person name="Carrington J.C."/>
            <person name="Mathur E.J."/>
        </authorList>
    </citation>
    <scope>NUCLEOTIDE SEQUENCE [LARGE SCALE GENOMIC DNA]</scope>
    <source>
        <strain>HTCC1062</strain>
    </source>
</reference>
<gene>
    <name evidence="1" type="primary">recR</name>
    <name type="ordered locus">SAR11_0509</name>
</gene>
<protein>
    <recommendedName>
        <fullName evidence="1">Recombination protein RecR</fullName>
    </recommendedName>
</protein>
<proteinExistence type="inferred from homology"/>
<accession>Q4FNA8</accession>
<keyword id="KW-0227">DNA damage</keyword>
<keyword id="KW-0233">DNA recombination</keyword>
<keyword id="KW-0234">DNA repair</keyword>
<keyword id="KW-0479">Metal-binding</keyword>
<keyword id="KW-1185">Reference proteome</keyword>
<keyword id="KW-0862">Zinc</keyword>
<keyword id="KW-0863">Zinc-finger</keyword>
<feature type="chain" id="PRO_0000322928" description="Recombination protein RecR">
    <location>
        <begin position="1"/>
        <end position="203"/>
    </location>
</feature>
<feature type="domain" description="Toprim" evidence="1">
    <location>
        <begin position="81"/>
        <end position="175"/>
    </location>
</feature>
<feature type="zinc finger region" description="C4-type" evidence="1">
    <location>
        <begin position="57"/>
        <end position="73"/>
    </location>
</feature>
<comment type="function">
    <text evidence="1">May play a role in DNA repair. It seems to be involved in an RecBC-independent recombinational process of DNA repair. It may act with RecF and RecO.</text>
</comment>
<comment type="similarity">
    <text evidence="1">Belongs to the RecR family.</text>
</comment>
<sequence length="203" mass="22420">MQNINEIEELIKLISKLPGLGPKSAKRIVLKLINNRDELVKPMANTLAQVYKNVIRCQSCGTLKSNSLGCNNCENSKEKYNKICVVEDIADQWSIENSNIYKGYFHILGGTISSAGQRKEDLLINSLVERVSRENIEEVILATSATVEGQTTAYYIEDSLKKTSTKVTKLAQGLPVGGEIESLDDGTLYSAFKNRTGIKTNSD</sequence>
<organism>
    <name type="scientific">Pelagibacter ubique (strain HTCC1062)</name>
    <dbReference type="NCBI Taxonomy" id="335992"/>
    <lineage>
        <taxon>Bacteria</taxon>
        <taxon>Pseudomonadati</taxon>
        <taxon>Pseudomonadota</taxon>
        <taxon>Alphaproteobacteria</taxon>
        <taxon>Candidatus Pelagibacterales</taxon>
        <taxon>Candidatus Pelagibacteraceae</taxon>
        <taxon>Candidatus Pelagibacter</taxon>
    </lineage>
</organism>
<evidence type="ECO:0000255" key="1">
    <source>
        <dbReference type="HAMAP-Rule" id="MF_00017"/>
    </source>
</evidence>
<name>RECR_PELUB</name>
<dbReference type="EMBL" id="CP000084">
    <property type="protein sequence ID" value="AAZ21331.1"/>
    <property type="molecule type" value="Genomic_DNA"/>
</dbReference>
<dbReference type="RefSeq" id="WP_006997394.1">
    <property type="nucleotide sequence ID" value="NC_007205.1"/>
</dbReference>
<dbReference type="SMR" id="Q4FNA8"/>
<dbReference type="STRING" id="335992.SAR11_0509"/>
<dbReference type="GeneID" id="66295011"/>
<dbReference type="KEGG" id="pub:SAR11_0509"/>
<dbReference type="eggNOG" id="COG0353">
    <property type="taxonomic scope" value="Bacteria"/>
</dbReference>
<dbReference type="HOGENOM" id="CLU_060739_1_1_5"/>
<dbReference type="OrthoDB" id="9802672at2"/>
<dbReference type="Proteomes" id="UP000002528">
    <property type="component" value="Chromosome"/>
</dbReference>
<dbReference type="GO" id="GO:0003677">
    <property type="term" value="F:DNA binding"/>
    <property type="evidence" value="ECO:0007669"/>
    <property type="project" value="UniProtKB-UniRule"/>
</dbReference>
<dbReference type="GO" id="GO:0008270">
    <property type="term" value="F:zinc ion binding"/>
    <property type="evidence" value="ECO:0007669"/>
    <property type="project" value="UniProtKB-KW"/>
</dbReference>
<dbReference type="GO" id="GO:0006310">
    <property type="term" value="P:DNA recombination"/>
    <property type="evidence" value="ECO:0007669"/>
    <property type="project" value="UniProtKB-UniRule"/>
</dbReference>
<dbReference type="GO" id="GO:0006281">
    <property type="term" value="P:DNA repair"/>
    <property type="evidence" value="ECO:0007669"/>
    <property type="project" value="UniProtKB-UniRule"/>
</dbReference>
<dbReference type="CDD" id="cd01025">
    <property type="entry name" value="TOPRIM_recR"/>
    <property type="match status" value="1"/>
</dbReference>
<dbReference type="Gene3D" id="3.40.1360.10">
    <property type="match status" value="1"/>
</dbReference>
<dbReference type="Gene3D" id="1.10.8.420">
    <property type="entry name" value="RecR Domain 1"/>
    <property type="match status" value="1"/>
</dbReference>
<dbReference type="HAMAP" id="MF_00017">
    <property type="entry name" value="RecR"/>
    <property type="match status" value="1"/>
</dbReference>
<dbReference type="InterPro" id="IPR000093">
    <property type="entry name" value="DNA_Rcmb_RecR"/>
</dbReference>
<dbReference type="InterPro" id="IPR023627">
    <property type="entry name" value="Rcmb_RecR"/>
</dbReference>
<dbReference type="InterPro" id="IPR006171">
    <property type="entry name" value="TOPRIM_dom"/>
</dbReference>
<dbReference type="InterPro" id="IPR034137">
    <property type="entry name" value="TOPRIM_RecR"/>
</dbReference>
<dbReference type="NCBIfam" id="TIGR00615">
    <property type="entry name" value="recR"/>
    <property type="match status" value="1"/>
</dbReference>
<dbReference type="PANTHER" id="PTHR30446">
    <property type="entry name" value="RECOMBINATION PROTEIN RECR"/>
    <property type="match status" value="1"/>
</dbReference>
<dbReference type="PANTHER" id="PTHR30446:SF0">
    <property type="entry name" value="RECOMBINATION PROTEIN RECR"/>
    <property type="match status" value="1"/>
</dbReference>
<dbReference type="Pfam" id="PF21175">
    <property type="entry name" value="RecR_C"/>
    <property type="match status" value="1"/>
</dbReference>
<dbReference type="Pfam" id="PF21176">
    <property type="entry name" value="RecR_HhH"/>
    <property type="match status" value="1"/>
</dbReference>
<dbReference type="Pfam" id="PF13662">
    <property type="entry name" value="Toprim_4"/>
    <property type="match status" value="1"/>
</dbReference>
<dbReference type="SMART" id="SM00493">
    <property type="entry name" value="TOPRIM"/>
    <property type="match status" value="1"/>
</dbReference>
<dbReference type="SUPFAM" id="SSF111304">
    <property type="entry name" value="Recombination protein RecR"/>
    <property type="match status" value="1"/>
</dbReference>
<dbReference type="PROSITE" id="PS50880">
    <property type="entry name" value="TOPRIM"/>
    <property type="match status" value="1"/>
</dbReference>